<name>SPXN1_PANTR</name>
<organism>
    <name type="scientific">Pan troglodytes</name>
    <name type="common">Chimpanzee</name>
    <dbReference type="NCBI Taxonomy" id="9598"/>
    <lineage>
        <taxon>Eukaryota</taxon>
        <taxon>Metazoa</taxon>
        <taxon>Chordata</taxon>
        <taxon>Craniata</taxon>
        <taxon>Vertebrata</taxon>
        <taxon>Euteleostomi</taxon>
        <taxon>Mammalia</taxon>
        <taxon>Eutheria</taxon>
        <taxon>Euarchontoglires</taxon>
        <taxon>Primates</taxon>
        <taxon>Haplorrhini</taxon>
        <taxon>Catarrhini</taxon>
        <taxon>Hominidae</taxon>
        <taxon>Pan</taxon>
    </lineage>
</organism>
<sequence length="72" mass="8277">MEKPTSSTNGEKRKSPCDSNSKNDEMQETPNRDLVLEPSLKKMKTSEYSTVLVLCYRKTKKIHSNQLENDQS</sequence>
<dbReference type="EMBL" id="AY457933">
    <property type="protein sequence ID" value="AAS19316.1"/>
    <property type="molecule type" value="Genomic_DNA"/>
</dbReference>
<dbReference type="RefSeq" id="XP_003317519.3">
    <property type="nucleotide sequence ID" value="XM_003317471.3"/>
</dbReference>
<dbReference type="FunCoup" id="Q6SJ91">
    <property type="interactions" value="3"/>
</dbReference>
<dbReference type="STRING" id="9598.ENSPTRP00000060315"/>
<dbReference type="PaxDb" id="9598-ENSPTRP00000047404"/>
<dbReference type="Ensembl" id="ENSPTRT00000072832.2">
    <property type="protein sequence ID" value="ENSPTRP00000060315.2"/>
    <property type="gene ID" value="ENSPTRG00000028276.5"/>
</dbReference>
<dbReference type="KEGG" id="ptr:129135293"/>
<dbReference type="eggNOG" id="ENOG502SCZ0">
    <property type="taxonomic scope" value="Eukaryota"/>
</dbReference>
<dbReference type="GeneTree" id="ENSGT00940000164738"/>
<dbReference type="InParanoid" id="Q6SJ91"/>
<dbReference type="OMA" id="RVLVFCY"/>
<dbReference type="Proteomes" id="UP000002277">
    <property type="component" value="Chromosome X"/>
</dbReference>
<dbReference type="Bgee" id="ENSPTRG00000028276">
    <property type="expression patterns" value="Expressed in testis and 2 other cell types or tissues"/>
</dbReference>
<dbReference type="InterPro" id="IPR010007">
    <property type="entry name" value="SPAN-X_fam"/>
</dbReference>
<dbReference type="Pfam" id="PF07458">
    <property type="entry name" value="SPAN-X"/>
    <property type="match status" value="1"/>
</dbReference>
<feature type="chain" id="PRO_0000285692" description="Sperm protein associated with the nucleus on the X chromosome N1">
    <location>
        <begin position="1"/>
        <end position="72"/>
    </location>
</feature>
<feature type="region of interest" description="Disordered" evidence="1">
    <location>
        <begin position="1"/>
        <end position="40"/>
    </location>
</feature>
<feature type="compositionally biased region" description="Basic and acidic residues" evidence="1">
    <location>
        <begin position="10"/>
        <end position="35"/>
    </location>
</feature>
<protein>
    <recommendedName>
        <fullName>Sperm protein associated with the nucleus on the X chromosome N1</fullName>
    </recommendedName>
    <alternativeName>
        <fullName>Nuclear-associated protein SPAN-Xn1</fullName>
        <shortName>SPANX-N1</shortName>
    </alternativeName>
    <alternativeName>
        <fullName>SPANX family member N1</fullName>
    </alternativeName>
</protein>
<proteinExistence type="inferred from homology"/>
<evidence type="ECO:0000256" key="1">
    <source>
        <dbReference type="SAM" id="MobiDB-lite"/>
    </source>
</evidence>
<evidence type="ECO:0000305" key="2"/>
<accession>Q6SJ91</accession>
<comment type="similarity">
    <text evidence="2">Belongs to the SPAN-X family.</text>
</comment>
<keyword id="KW-1185">Reference proteome</keyword>
<gene>
    <name type="primary">SPANXN1</name>
</gene>
<reference key="1">
    <citation type="journal article" date="2004" name="Proc. Natl. Acad. Sci. U.S.A.">
        <title>The SPANX gene family of cancer/testis-specific antigens: rapid evolution and amplification in African great apes and hominids.</title>
        <authorList>
            <person name="Kouprina N."/>
            <person name="Mullokandov M."/>
            <person name="Rogozin I.B."/>
            <person name="Collins N.K."/>
            <person name="Solomon G."/>
            <person name="Otstot J."/>
            <person name="Risinger J.I."/>
            <person name="Koonin E.V."/>
            <person name="Barrett J.C."/>
            <person name="Larionov V."/>
        </authorList>
    </citation>
    <scope>NUCLEOTIDE SEQUENCE [GENOMIC DNA]</scope>
</reference>